<feature type="chain" id="PRO_0000243802" description="Small ribosomal subunit protein bS16">
    <location>
        <begin position="1"/>
        <end position="79"/>
    </location>
</feature>
<protein>
    <recommendedName>
        <fullName evidence="1">Small ribosomal subunit protein bS16</fullName>
    </recommendedName>
    <alternativeName>
        <fullName evidence="2">30S ribosomal protein S16</fullName>
    </alternativeName>
</protein>
<gene>
    <name evidence="1" type="primary">rpsP</name>
    <name type="ordered locus">Dde_1099</name>
</gene>
<name>RS16_OLEA2</name>
<reference key="1">
    <citation type="journal article" date="2011" name="J. Bacteriol.">
        <title>Complete genome sequence and updated annotation of Desulfovibrio alaskensis G20.</title>
        <authorList>
            <person name="Hauser L.J."/>
            <person name="Land M.L."/>
            <person name="Brown S.D."/>
            <person name="Larimer F."/>
            <person name="Keller K.L."/>
            <person name="Rapp-Giles B.J."/>
            <person name="Price M.N."/>
            <person name="Lin M."/>
            <person name="Bruce D.C."/>
            <person name="Detter J.C."/>
            <person name="Tapia R."/>
            <person name="Han C.S."/>
            <person name="Goodwin L.A."/>
            <person name="Cheng J.F."/>
            <person name="Pitluck S."/>
            <person name="Copeland A."/>
            <person name="Lucas S."/>
            <person name="Nolan M."/>
            <person name="Lapidus A.L."/>
            <person name="Palumbo A.V."/>
            <person name="Wall J.D."/>
        </authorList>
    </citation>
    <scope>NUCLEOTIDE SEQUENCE [LARGE SCALE GENOMIC DNA]</scope>
    <source>
        <strain>ATCC BAA-1058 / DSM 17464 / G20</strain>
    </source>
</reference>
<keyword id="KW-1185">Reference proteome</keyword>
<keyword id="KW-0687">Ribonucleoprotein</keyword>
<keyword id="KW-0689">Ribosomal protein</keyword>
<comment type="similarity">
    <text evidence="1">Belongs to the bacterial ribosomal protein bS16 family.</text>
</comment>
<organism>
    <name type="scientific">Oleidesulfovibrio alaskensis (strain ATCC BAA-1058 / DSM 17464 / G20)</name>
    <name type="common">Desulfovibrio alaskensis</name>
    <dbReference type="NCBI Taxonomy" id="207559"/>
    <lineage>
        <taxon>Bacteria</taxon>
        <taxon>Pseudomonadati</taxon>
        <taxon>Thermodesulfobacteriota</taxon>
        <taxon>Desulfovibrionia</taxon>
        <taxon>Desulfovibrionales</taxon>
        <taxon>Desulfovibrionaceae</taxon>
        <taxon>Oleidesulfovibrio</taxon>
    </lineage>
</organism>
<dbReference type="EMBL" id="CP000112">
    <property type="protein sequence ID" value="ABB37900.1"/>
    <property type="molecule type" value="Genomic_DNA"/>
</dbReference>
<dbReference type="RefSeq" id="WP_011367130.1">
    <property type="nucleotide sequence ID" value="NC_007519.1"/>
</dbReference>
<dbReference type="SMR" id="Q313J6"/>
<dbReference type="STRING" id="207559.Dde_1099"/>
<dbReference type="KEGG" id="dde:Dde_1099"/>
<dbReference type="eggNOG" id="COG0228">
    <property type="taxonomic scope" value="Bacteria"/>
</dbReference>
<dbReference type="HOGENOM" id="CLU_100590_5_0_7"/>
<dbReference type="Proteomes" id="UP000002710">
    <property type="component" value="Chromosome"/>
</dbReference>
<dbReference type="GO" id="GO:0005737">
    <property type="term" value="C:cytoplasm"/>
    <property type="evidence" value="ECO:0007669"/>
    <property type="project" value="UniProtKB-ARBA"/>
</dbReference>
<dbReference type="GO" id="GO:0015935">
    <property type="term" value="C:small ribosomal subunit"/>
    <property type="evidence" value="ECO:0007669"/>
    <property type="project" value="TreeGrafter"/>
</dbReference>
<dbReference type="GO" id="GO:0003735">
    <property type="term" value="F:structural constituent of ribosome"/>
    <property type="evidence" value="ECO:0007669"/>
    <property type="project" value="InterPro"/>
</dbReference>
<dbReference type="GO" id="GO:0006412">
    <property type="term" value="P:translation"/>
    <property type="evidence" value="ECO:0007669"/>
    <property type="project" value="UniProtKB-UniRule"/>
</dbReference>
<dbReference type="Gene3D" id="3.30.1320.10">
    <property type="match status" value="1"/>
</dbReference>
<dbReference type="HAMAP" id="MF_00385">
    <property type="entry name" value="Ribosomal_bS16"/>
    <property type="match status" value="1"/>
</dbReference>
<dbReference type="InterPro" id="IPR000307">
    <property type="entry name" value="Ribosomal_bS16"/>
</dbReference>
<dbReference type="InterPro" id="IPR023803">
    <property type="entry name" value="Ribosomal_bS16_dom_sf"/>
</dbReference>
<dbReference type="NCBIfam" id="TIGR00002">
    <property type="entry name" value="S16"/>
    <property type="match status" value="1"/>
</dbReference>
<dbReference type="PANTHER" id="PTHR12919">
    <property type="entry name" value="30S RIBOSOMAL PROTEIN S16"/>
    <property type="match status" value="1"/>
</dbReference>
<dbReference type="PANTHER" id="PTHR12919:SF20">
    <property type="entry name" value="SMALL RIBOSOMAL SUBUNIT PROTEIN BS16M"/>
    <property type="match status" value="1"/>
</dbReference>
<dbReference type="Pfam" id="PF00886">
    <property type="entry name" value="Ribosomal_S16"/>
    <property type="match status" value="1"/>
</dbReference>
<dbReference type="SUPFAM" id="SSF54565">
    <property type="entry name" value="Ribosomal protein S16"/>
    <property type="match status" value="1"/>
</dbReference>
<proteinExistence type="inferred from homology"/>
<accession>Q313J6</accession>
<evidence type="ECO:0000255" key="1">
    <source>
        <dbReference type="HAMAP-Rule" id="MF_00385"/>
    </source>
</evidence>
<evidence type="ECO:0000305" key="2"/>
<sequence length="79" mass="9194">MAVKLRLTRMGNKKRAFYRIIAINSEARREGRPLDYIGYYNPMVDPAEVKIDTEKVQKWLERGAEPTDTVRALLKKNAQ</sequence>